<dbReference type="EC" id="2.1.1.33" evidence="2"/>
<dbReference type="EMBL" id="CP000744">
    <property type="protein sequence ID" value="ABR85594.1"/>
    <property type="molecule type" value="Genomic_DNA"/>
</dbReference>
<dbReference type="SMR" id="A6UYJ1"/>
<dbReference type="KEGG" id="pap:PSPA7_0481"/>
<dbReference type="HOGENOM" id="CLU_050910_0_1_6"/>
<dbReference type="UniPathway" id="UPA00989"/>
<dbReference type="Proteomes" id="UP000001582">
    <property type="component" value="Chromosome"/>
</dbReference>
<dbReference type="GO" id="GO:0043527">
    <property type="term" value="C:tRNA methyltransferase complex"/>
    <property type="evidence" value="ECO:0007669"/>
    <property type="project" value="TreeGrafter"/>
</dbReference>
<dbReference type="GO" id="GO:0008176">
    <property type="term" value="F:tRNA (guanine(46)-N7)-methyltransferase activity"/>
    <property type="evidence" value="ECO:0007669"/>
    <property type="project" value="UniProtKB-UniRule"/>
</dbReference>
<dbReference type="CDD" id="cd02440">
    <property type="entry name" value="AdoMet_MTases"/>
    <property type="match status" value="1"/>
</dbReference>
<dbReference type="FunFam" id="3.40.50.150:FF:000024">
    <property type="entry name" value="tRNA (guanine-N(7)-)-methyltransferase"/>
    <property type="match status" value="1"/>
</dbReference>
<dbReference type="Gene3D" id="3.40.50.150">
    <property type="entry name" value="Vaccinia Virus protein VP39"/>
    <property type="match status" value="1"/>
</dbReference>
<dbReference type="HAMAP" id="MF_01057">
    <property type="entry name" value="tRNA_methyltr_TrmB"/>
    <property type="match status" value="1"/>
</dbReference>
<dbReference type="InterPro" id="IPR029063">
    <property type="entry name" value="SAM-dependent_MTases_sf"/>
</dbReference>
<dbReference type="InterPro" id="IPR003358">
    <property type="entry name" value="tRNA_(Gua-N-7)_MeTrfase_Trmb"/>
</dbReference>
<dbReference type="InterPro" id="IPR055361">
    <property type="entry name" value="tRNA_methyltr_TrmB_bact"/>
</dbReference>
<dbReference type="NCBIfam" id="TIGR00091">
    <property type="entry name" value="tRNA (guanosine(46)-N7)-methyltransferase TrmB"/>
    <property type="match status" value="1"/>
</dbReference>
<dbReference type="PANTHER" id="PTHR23417">
    <property type="entry name" value="3-DEOXY-D-MANNO-OCTULOSONIC-ACID TRANSFERASE/TRNA GUANINE-N 7 - -METHYLTRANSFERASE"/>
    <property type="match status" value="1"/>
</dbReference>
<dbReference type="PANTHER" id="PTHR23417:SF14">
    <property type="entry name" value="PENTACOTRIPEPTIDE-REPEAT REGION OF PRORP DOMAIN-CONTAINING PROTEIN"/>
    <property type="match status" value="1"/>
</dbReference>
<dbReference type="Pfam" id="PF02390">
    <property type="entry name" value="Methyltransf_4"/>
    <property type="match status" value="1"/>
</dbReference>
<dbReference type="SUPFAM" id="SSF53335">
    <property type="entry name" value="S-adenosyl-L-methionine-dependent methyltransferases"/>
    <property type="match status" value="1"/>
</dbReference>
<dbReference type="PROSITE" id="PS51625">
    <property type="entry name" value="SAM_MT_TRMB"/>
    <property type="match status" value="1"/>
</dbReference>
<gene>
    <name evidence="2" type="primary">trmB</name>
    <name type="ordered locus">PSPA7_0481</name>
</gene>
<organism>
    <name type="scientific">Pseudomonas paraeruginosa (strain DSM 24068 / PA7)</name>
    <name type="common">Pseudomonas aeruginosa (strain PA7)</name>
    <dbReference type="NCBI Taxonomy" id="381754"/>
    <lineage>
        <taxon>Bacteria</taxon>
        <taxon>Pseudomonadati</taxon>
        <taxon>Pseudomonadota</taxon>
        <taxon>Gammaproteobacteria</taxon>
        <taxon>Pseudomonadales</taxon>
        <taxon>Pseudomonadaceae</taxon>
        <taxon>Pseudomonas</taxon>
        <taxon>Pseudomonas paraeruginosa</taxon>
    </lineage>
</organism>
<name>TRMB_PSEP7</name>
<comment type="function">
    <text evidence="2">Catalyzes the formation of N(7)-methylguanine at position 46 (m7G46) in tRNA.</text>
</comment>
<comment type="catalytic activity">
    <reaction evidence="2">
        <text>guanosine(46) in tRNA + S-adenosyl-L-methionine = N(7)-methylguanosine(46) in tRNA + S-adenosyl-L-homocysteine</text>
        <dbReference type="Rhea" id="RHEA:42708"/>
        <dbReference type="Rhea" id="RHEA-COMP:10188"/>
        <dbReference type="Rhea" id="RHEA-COMP:10189"/>
        <dbReference type="ChEBI" id="CHEBI:57856"/>
        <dbReference type="ChEBI" id="CHEBI:59789"/>
        <dbReference type="ChEBI" id="CHEBI:74269"/>
        <dbReference type="ChEBI" id="CHEBI:74480"/>
        <dbReference type="EC" id="2.1.1.33"/>
    </reaction>
</comment>
<comment type="pathway">
    <text evidence="2">tRNA modification; N(7)-methylguanine-tRNA biosynthesis.</text>
</comment>
<comment type="similarity">
    <text evidence="2">Belongs to the class I-like SAM-binding methyltransferase superfamily. TrmB family.</text>
</comment>
<proteinExistence type="inferred from homology"/>
<reference key="1">
    <citation type="submission" date="2007-06" db="EMBL/GenBank/DDBJ databases">
        <authorList>
            <person name="Dodson R.J."/>
            <person name="Harkins D."/>
            <person name="Paulsen I.T."/>
        </authorList>
    </citation>
    <scope>NUCLEOTIDE SEQUENCE [LARGE SCALE GENOMIC DNA]</scope>
    <source>
        <strain>DSM 24068 / PA7</strain>
    </source>
</reference>
<evidence type="ECO:0000250" key="1"/>
<evidence type="ECO:0000255" key="2">
    <source>
        <dbReference type="HAMAP-Rule" id="MF_01057"/>
    </source>
</evidence>
<evidence type="ECO:0000256" key="3">
    <source>
        <dbReference type="SAM" id="MobiDB-lite"/>
    </source>
</evidence>
<feature type="chain" id="PRO_1000064403" description="tRNA (guanine-N(7)-)-methyltransferase">
    <location>
        <begin position="1"/>
        <end position="244"/>
    </location>
</feature>
<feature type="region of interest" description="Disordered" evidence="3">
    <location>
        <begin position="1"/>
        <end position="20"/>
    </location>
</feature>
<feature type="compositionally biased region" description="Polar residues" evidence="3">
    <location>
        <begin position="1"/>
        <end position="10"/>
    </location>
</feature>
<feature type="active site" evidence="1">
    <location>
        <position position="149"/>
    </location>
</feature>
<feature type="binding site" evidence="2">
    <location>
        <position position="74"/>
    </location>
    <ligand>
        <name>S-adenosyl-L-methionine</name>
        <dbReference type="ChEBI" id="CHEBI:59789"/>
    </ligand>
</feature>
<feature type="binding site" evidence="2">
    <location>
        <position position="99"/>
    </location>
    <ligand>
        <name>S-adenosyl-L-methionine</name>
        <dbReference type="ChEBI" id="CHEBI:59789"/>
    </ligand>
</feature>
<feature type="binding site" evidence="2">
    <location>
        <position position="126"/>
    </location>
    <ligand>
        <name>S-adenosyl-L-methionine</name>
        <dbReference type="ChEBI" id="CHEBI:59789"/>
    </ligand>
</feature>
<feature type="binding site" evidence="2">
    <location>
        <position position="149"/>
    </location>
    <ligand>
        <name>S-adenosyl-L-methionine</name>
        <dbReference type="ChEBI" id="CHEBI:59789"/>
    </ligand>
</feature>
<feature type="binding site" evidence="2">
    <location>
        <position position="153"/>
    </location>
    <ligand>
        <name>substrate</name>
    </ligand>
</feature>
<feature type="binding site" evidence="2">
    <location>
        <position position="185"/>
    </location>
    <ligand>
        <name>substrate</name>
    </ligand>
</feature>
<feature type="binding site" evidence="2">
    <location>
        <begin position="222"/>
        <end position="225"/>
    </location>
    <ligand>
        <name>substrate</name>
    </ligand>
</feature>
<protein>
    <recommendedName>
        <fullName evidence="2">tRNA (guanine-N(7)-)-methyltransferase</fullName>
        <ecNumber evidence="2">2.1.1.33</ecNumber>
    </recommendedName>
    <alternativeName>
        <fullName evidence="2">tRNA (guanine(46)-N(7))-methyltransferase</fullName>
    </alternativeName>
    <alternativeName>
        <fullName evidence="2">tRNA(m7G46)-methyltransferase</fullName>
    </alternativeName>
</protein>
<keyword id="KW-0489">Methyltransferase</keyword>
<keyword id="KW-0949">S-adenosyl-L-methionine</keyword>
<keyword id="KW-0808">Transferase</keyword>
<keyword id="KW-0819">tRNA processing</keyword>
<sequence>MSDTPQSPAQDSLAEHDEARPMRTVKSFVMRAGRMTEGQQRGLDLGWPKFGLELSDEVQDFDAIFGRQAPRTFEIGFGMGHSTLEMAAAAPDLDFIGVEVHKPGVGALLNGLLTQGLGNVRVYSCDALEVLRHCVADASLDRLLLFFPDPWHKKRHHKRRIVQPEFAELVRRKLKVGGVLHMATDWEPYAEHMLDVMSAAPGYRNQAEDGRFVPRPQERPVTKFERRGERLGHGVWDLKFERVD</sequence>
<accession>A6UYJ1</accession>